<organism>
    <name type="scientific">Homo sapiens</name>
    <name type="common">Human</name>
    <dbReference type="NCBI Taxonomy" id="9606"/>
    <lineage>
        <taxon>Eukaryota</taxon>
        <taxon>Metazoa</taxon>
        <taxon>Chordata</taxon>
        <taxon>Craniata</taxon>
        <taxon>Vertebrata</taxon>
        <taxon>Euteleostomi</taxon>
        <taxon>Mammalia</taxon>
        <taxon>Eutheria</taxon>
        <taxon>Euarchontoglires</taxon>
        <taxon>Primates</taxon>
        <taxon>Haplorrhini</taxon>
        <taxon>Catarrhini</taxon>
        <taxon>Hominidae</taxon>
        <taxon>Homo</taxon>
    </lineage>
</organism>
<sequence>MFLLLALLTELGRLQAHEGSEGIFLHVTVPRKIKSNDSEVSERKMIYIITIDGQPYTLHLGKQSFLPQNFLVYTYNETGSLHSVSPYFMMHCHYQGYAAEFPNSFVTLSICSGLRGFLQFENISYGIEPVESSARFEHIIYQMKNNDPNVSILAVNYSHIWQKDQPYKVPLNSQIKNLSKLLPQYLEIYIIVEKALYDYMGSEMMAVTQKIVQVIGLVNTMFTQFKLTVILSSLELWSNENQISTSGDADDILQRFLAWKRDYLILRPHDIAYLLVYRKHPKYVGATFPGTVCNKSYDAGIAMYPDAIGLEGFSVIIAQLLGLNVGLTYDDITQCFCLRATCIMNHEAVSASGRKIFSNCSMHDYRYFVSKFETKCLQKLSNLQPLHQNQPVCGNGILESNEECDCGNKNECQFKKCCDYNTCKLKGSVKCGSGPCCTSKCELSIAGTPCRKSIDPECDFTEYCNGTSSNCVPDTYALNGRLCKLGTAYCYNGQCQTTDNQCAKIFGKGAQGAPFACFKEVNSLHERSENCGFKNSQPLPCERKDVLCGKLACVQPHKNANKSDAQSTVYSYIQDHVCVSIATGSSMRSDGTDNAYVADGTMCGPEMYCVNKTCRKVHLMGYNCNATTKCKGKGICNNFGNCQCFPGHRPPDCKFQFGSPGGSIDDGNFQKSGDFYTEKGYNTHWNNWFILSFCIFLPFFIVFTTVIFKRNEISKSCNRENAEYNRNSSVVSESDDVGH</sequence>
<feature type="signal peptide" evidence="2">
    <location>
        <begin position="1"/>
        <end position="16"/>
    </location>
</feature>
<feature type="propeptide" id="PRO_0000029096" evidence="2">
    <location>
        <begin position="17"/>
        <end position="184"/>
    </location>
</feature>
<feature type="chain" id="PRO_0000029097" description="Disintegrin and metalloproteinase domain-containing protein 18">
    <location>
        <begin position="185"/>
        <end position="739"/>
    </location>
</feature>
<feature type="topological domain" description="Extracellular" evidence="2">
    <location>
        <begin position="177"/>
        <end position="687"/>
    </location>
</feature>
<feature type="transmembrane region" description="Helical" evidence="2">
    <location>
        <begin position="688"/>
        <end position="708"/>
    </location>
</feature>
<feature type="topological domain" description="Cytoplasmic" evidence="2">
    <location>
        <begin position="709"/>
        <end position="739"/>
    </location>
</feature>
<feature type="domain" description="Peptidase M12B" evidence="4">
    <location>
        <begin position="184"/>
        <end position="381"/>
    </location>
</feature>
<feature type="domain" description="Disintegrin" evidence="3">
    <location>
        <begin position="390"/>
        <end position="479"/>
    </location>
</feature>
<feature type="domain" description="EGF-like">
    <location>
        <begin position="620"/>
        <end position="654"/>
    </location>
</feature>
<feature type="glycosylation site" description="N-linked (GlcNAc...) asparagine" evidence="2">
    <location>
        <position position="36"/>
    </location>
</feature>
<feature type="glycosylation site" description="N-linked (GlcNAc...) asparagine" evidence="2">
    <location>
        <position position="76"/>
    </location>
</feature>
<feature type="glycosylation site" description="N-linked (GlcNAc...) asparagine" evidence="2">
    <location>
        <position position="122"/>
    </location>
</feature>
<feature type="glycosylation site" description="N-linked (GlcNAc...) asparagine" evidence="2">
    <location>
        <position position="149"/>
    </location>
</feature>
<feature type="glycosylation site" description="N-linked (GlcNAc...) asparagine" evidence="2">
    <location>
        <position position="156"/>
    </location>
</feature>
<feature type="glycosylation site" description="N-linked (GlcNAc...) asparagine" evidence="2">
    <location>
        <position position="177"/>
    </location>
</feature>
<feature type="glycosylation site" description="N-linked (GlcNAc...) asparagine" evidence="2">
    <location>
        <position position="294"/>
    </location>
</feature>
<feature type="glycosylation site" description="N-linked (GlcNAc...) asparagine" evidence="2">
    <location>
        <position position="359"/>
    </location>
</feature>
<feature type="glycosylation site" description="N-linked (GlcNAc...) asparagine" evidence="2">
    <location>
        <position position="465"/>
    </location>
</feature>
<feature type="glycosylation site" description="N-linked (GlcNAc...) asparagine" evidence="2">
    <location>
        <position position="561"/>
    </location>
</feature>
<feature type="glycosylation site" description="N-linked (GlcNAc...) asparagine" evidence="2">
    <location>
        <position position="611"/>
    </location>
</feature>
<feature type="glycosylation site" description="N-linked (GlcNAc...) asparagine" evidence="2">
    <location>
        <position position="625"/>
    </location>
</feature>
<feature type="disulfide bond" evidence="1">
    <location>
        <begin position="293"/>
        <end position="376"/>
    </location>
</feature>
<feature type="disulfide bond" evidence="1">
    <location>
        <begin position="335"/>
        <end position="360"/>
    </location>
</feature>
<feature type="disulfide bond" evidence="1">
    <location>
        <begin position="337"/>
        <end position="342"/>
    </location>
</feature>
<feature type="disulfide bond" evidence="1">
    <location>
        <begin position="450"/>
        <end position="471"/>
    </location>
</feature>
<feature type="disulfide bond" evidence="1">
    <location>
        <begin position="624"/>
        <end position="636"/>
    </location>
</feature>
<feature type="disulfide bond" evidence="1">
    <location>
        <begin position="630"/>
        <end position="642"/>
    </location>
</feature>
<feature type="disulfide bond" evidence="1">
    <location>
        <begin position="644"/>
        <end position="653"/>
    </location>
</feature>
<feature type="splice variant" id="VSP_043285" description="In isoform 3." evidence="7">
    <original>IKNLSKLL</original>
    <variation>VTVIILML</variation>
    <location>
        <begin position="175"/>
        <end position="182"/>
    </location>
</feature>
<feature type="splice variant" id="VSP_043286" description="In isoform 3." evidence="7">
    <location>
        <begin position="183"/>
        <end position="739"/>
    </location>
</feature>
<feature type="splice variant" id="VSP_012033" description="In isoform 2." evidence="6">
    <location>
        <begin position="197"/>
        <end position="220"/>
    </location>
</feature>
<feature type="sequence variant" id="VAR_066312" description="In a cutaneous metastatic melanoma sample; somatic mutation; dbSNP:rs267601916." evidence="5">
    <original>P</original>
    <variation>S</variation>
    <location>
        <position position="170"/>
    </location>
</feature>
<feature type="sequence variant" id="VAR_051588" description="In dbSNP:rs10093794.">
    <original>V</original>
    <variation>F</variation>
    <location>
        <position position="212"/>
    </location>
</feature>
<feature type="sequence variant" id="VAR_066313" description="In a cutaneous metastatic melanoma sample; somatic mutation." evidence="5">
    <original>V</original>
    <variation>G</variation>
    <location>
        <position position="284"/>
    </location>
</feature>
<feature type="sequence variant" id="VAR_066314" description="In a cutaneous metastatic melanoma sample; somatic mutation; dbSNP:rs267601918." evidence="5">
    <original>M</original>
    <variation>I</variation>
    <location>
        <position position="344"/>
    </location>
</feature>
<feature type="sequence variant" id="VAR_066315" description="In a cutaneous metastatic melanoma sample; somatic mutation." evidence="5">
    <original>M</original>
    <variation>K</variation>
    <location>
        <position position="362"/>
    </location>
</feature>
<feature type="sequence variant" id="VAR_066316" description="In a cutaneous metastatic melanoma sample; somatic mutation." evidence="5">
    <original>S</original>
    <variation>L</variation>
    <location>
        <position position="536"/>
    </location>
</feature>
<comment type="function">
    <text evidence="1">Sperm surface membrane protein that may be involved in spermatogenesis and fertilization. This is a non catalytic metalloprotease-like protein (By similarity).</text>
</comment>
<comment type="subcellular location">
    <subcellularLocation>
        <location>Membrane</location>
        <topology>Single-pass type I membrane protein</topology>
    </subcellularLocation>
</comment>
<comment type="alternative products">
    <event type="alternative splicing"/>
    <isoform>
        <id>Q9Y3Q7-1</id>
        <name>1</name>
        <sequence type="displayed"/>
    </isoform>
    <isoform>
        <id>Q9Y3Q7-2</id>
        <name>2</name>
        <sequence type="described" ref="VSP_012033"/>
    </isoform>
    <isoform>
        <id>Q9Y3Q7-3</id>
        <name>3</name>
        <sequence type="described" ref="VSP_043285 VSP_043286"/>
    </isoform>
</comment>
<comment type="tissue specificity">
    <text>Expressed specifically in testis.</text>
</comment>
<comment type="domain">
    <text evidence="1">A tripeptide motif (ECD) within disintegrin-like domain could be involved in the binding to egg integrin receptor and thus could mediate sperm/egg binding.</text>
</comment>
<comment type="PTM">
    <text evidence="1">The prodomain and the metalloprotease-like domain are cleaved during the epididymal maturation of the spermatozoa.</text>
</comment>
<gene>
    <name type="primary">ADAM18</name>
    <name type="synonym">TMDC3</name>
    <name type="ORF">UNQ858/PRO1867</name>
</gene>
<reference key="1">
    <citation type="submission" date="1999-04" db="EMBL/GenBank/DDBJ databases">
        <title>Nucleotide sequence of the human tMDC III sperm surface protein transcript.</title>
        <authorList>
            <person name="Hall L."/>
            <person name="Frayne J."/>
            <person name="Dimsey E.A."/>
        </authorList>
    </citation>
    <scope>NUCLEOTIDE SEQUENCE [MRNA] (ISOFORM 1)</scope>
    <source>
        <tissue>Testis</tissue>
    </source>
</reference>
<reference key="2">
    <citation type="journal article" date="2003" name="Genome Res.">
        <title>The secreted protein discovery initiative (SPDI), a large-scale effort to identify novel human secreted and transmembrane proteins: a bioinformatics assessment.</title>
        <authorList>
            <person name="Clark H.F."/>
            <person name="Gurney A.L."/>
            <person name="Abaya E."/>
            <person name="Baker K."/>
            <person name="Baldwin D.T."/>
            <person name="Brush J."/>
            <person name="Chen J."/>
            <person name="Chow B."/>
            <person name="Chui C."/>
            <person name="Crowley C."/>
            <person name="Currell B."/>
            <person name="Deuel B."/>
            <person name="Dowd P."/>
            <person name="Eaton D."/>
            <person name="Foster J.S."/>
            <person name="Grimaldi C."/>
            <person name="Gu Q."/>
            <person name="Hass P.E."/>
            <person name="Heldens S."/>
            <person name="Huang A."/>
            <person name="Kim H.S."/>
            <person name="Klimowski L."/>
            <person name="Jin Y."/>
            <person name="Johnson S."/>
            <person name="Lee J."/>
            <person name="Lewis L."/>
            <person name="Liao D."/>
            <person name="Mark M.R."/>
            <person name="Robbie E."/>
            <person name="Sanchez C."/>
            <person name="Schoenfeld J."/>
            <person name="Seshagiri S."/>
            <person name="Simmons L."/>
            <person name="Singh J."/>
            <person name="Smith V."/>
            <person name="Stinson J."/>
            <person name="Vagts A."/>
            <person name="Vandlen R.L."/>
            <person name="Watanabe C."/>
            <person name="Wieand D."/>
            <person name="Woods K."/>
            <person name="Xie M.-H."/>
            <person name="Yansura D.G."/>
            <person name="Yi S."/>
            <person name="Yu G."/>
            <person name="Yuan J."/>
            <person name="Zhang M."/>
            <person name="Zhang Z."/>
            <person name="Goddard A.D."/>
            <person name="Wood W.I."/>
            <person name="Godowski P.J."/>
            <person name="Gray A.M."/>
        </authorList>
    </citation>
    <scope>NUCLEOTIDE SEQUENCE [LARGE SCALE MRNA] (ISOFORM 2)</scope>
</reference>
<reference key="3">
    <citation type="journal article" date="2004" name="Nat. Genet.">
        <title>Complete sequencing and characterization of 21,243 full-length human cDNAs.</title>
        <authorList>
            <person name="Ota T."/>
            <person name="Suzuki Y."/>
            <person name="Nishikawa T."/>
            <person name="Otsuki T."/>
            <person name="Sugiyama T."/>
            <person name="Irie R."/>
            <person name="Wakamatsu A."/>
            <person name="Hayashi K."/>
            <person name="Sato H."/>
            <person name="Nagai K."/>
            <person name="Kimura K."/>
            <person name="Makita H."/>
            <person name="Sekine M."/>
            <person name="Obayashi M."/>
            <person name="Nishi T."/>
            <person name="Shibahara T."/>
            <person name="Tanaka T."/>
            <person name="Ishii S."/>
            <person name="Yamamoto J."/>
            <person name="Saito K."/>
            <person name="Kawai Y."/>
            <person name="Isono Y."/>
            <person name="Nakamura Y."/>
            <person name="Nagahari K."/>
            <person name="Murakami K."/>
            <person name="Yasuda T."/>
            <person name="Iwayanagi T."/>
            <person name="Wagatsuma M."/>
            <person name="Shiratori A."/>
            <person name="Sudo H."/>
            <person name="Hosoiri T."/>
            <person name="Kaku Y."/>
            <person name="Kodaira H."/>
            <person name="Kondo H."/>
            <person name="Sugawara M."/>
            <person name="Takahashi M."/>
            <person name="Kanda K."/>
            <person name="Yokoi T."/>
            <person name="Furuya T."/>
            <person name="Kikkawa E."/>
            <person name="Omura Y."/>
            <person name="Abe K."/>
            <person name="Kamihara K."/>
            <person name="Katsuta N."/>
            <person name="Sato K."/>
            <person name="Tanikawa M."/>
            <person name="Yamazaki M."/>
            <person name="Ninomiya K."/>
            <person name="Ishibashi T."/>
            <person name="Yamashita H."/>
            <person name="Murakawa K."/>
            <person name="Fujimori K."/>
            <person name="Tanai H."/>
            <person name="Kimata M."/>
            <person name="Watanabe M."/>
            <person name="Hiraoka S."/>
            <person name="Chiba Y."/>
            <person name="Ishida S."/>
            <person name="Ono Y."/>
            <person name="Takiguchi S."/>
            <person name="Watanabe S."/>
            <person name="Yosida M."/>
            <person name="Hotuta T."/>
            <person name="Kusano J."/>
            <person name="Kanehori K."/>
            <person name="Takahashi-Fujii A."/>
            <person name="Hara H."/>
            <person name="Tanase T.-O."/>
            <person name="Nomura Y."/>
            <person name="Togiya S."/>
            <person name="Komai F."/>
            <person name="Hara R."/>
            <person name="Takeuchi K."/>
            <person name="Arita M."/>
            <person name="Imose N."/>
            <person name="Musashino K."/>
            <person name="Yuuki H."/>
            <person name="Oshima A."/>
            <person name="Sasaki N."/>
            <person name="Aotsuka S."/>
            <person name="Yoshikawa Y."/>
            <person name="Matsunawa H."/>
            <person name="Ichihara T."/>
            <person name="Shiohata N."/>
            <person name="Sano S."/>
            <person name="Moriya S."/>
            <person name="Momiyama H."/>
            <person name="Satoh N."/>
            <person name="Takami S."/>
            <person name="Terashima Y."/>
            <person name="Suzuki O."/>
            <person name="Nakagawa S."/>
            <person name="Senoh A."/>
            <person name="Mizoguchi H."/>
            <person name="Goto Y."/>
            <person name="Shimizu F."/>
            <person name="Wakebe H."/>
            <person name="Hishigaki H."/>
            <person name="Watanabe T."/>
            <person name="Sugiyama A."/>
            <person name="Takemoto M."/>
            <person name="Kawakami B."/>
            <person name="Yamazaki M."/>
            <person name="Watanabe K."/>
            <person name="Kumagai A."/>
            <person name="Itakura S."/>
            <person name="Fukuzumi Y."/>
            <person name="Fujimori Y."/>
            <person name="Komiyama M."/>
            <person name="Tashiro H."/>
            <person name="Tanigami A."/>
            <person name="Fujiwara T."/>
            <person name="Ono T."/>
            <person name="Yamada K."/>
            <person name="Fujii Y."/>
            <person name="Ozaki K."/>
            <person name="Hirao M."/>
            <person name="Ohmori Y."/>
            <person name="Kawabata A."/>
            <person name="Hikiji T."/>
            <person name="Kobatake N."/>
            <person name="Inagaki H."/>
            <person name="Ikema Y."/>
            <person name="Okamoto S."/>
            <person name="Okitani R."/>
            <person name="Kawakami T."/>
            <person name="Noguchi S."/>
            <person name="Itoh T."/>
            <person name="Shigeta K."/>
            <person name="Senba T."/>
            <person name="Matsumura K."/>
            <person name="Nakajima Y."/>
            <person name="Mizuno T."/>
            <person name="Morinaga M."/>
            <person name="Sasaki M."/>
            <person name="Togashi T."/>
            <person name="Oyama M."/>
            <person name="Hata H."/>
            <person name="Watanabe M."/>
            <person name="Komatsu T."/>
            <person name="Mizushima-Sugano J."/>
            <person name="Satoh T."/>
            <person name="Shirai Y."/>
            <person name="Takahashi Y."/>
            <person name="Nakagawa K."/>
            <person name="Okumura K."/>
            <person name="Nagase T."/>
            <person name="Nomura N."/>
            <person name="Kikuchi H."/>
            <person name="Masuho Y."/>
            <person name="Yamashita R."/>
            <person name="Nakai K."/>
            <person name="Yada T."/>
            <person name="Nakamura Y."/>
            <person name="Ohara O."/>
            <person name="Isogai T."/>
            <person name="Sugano S."/>
        </authorList>
    </citation>
    <scope>NUCLEOTIDE SEQUENCE [LARGE SCALE MRNA] (ISOFORM 1)</scope>
    <source>
        <tissue>Testis</tissue>
    </source>
</reference>
<reference key="4">
    <citation type="journal article" date="2006" name="Nature">
        <title>DNA sequence and analysis of human chromosome 8.</title>
        <authorList>
            <person name="Nusbaum C."/>
            <person name="Mikkelsen T.S."/>
            <person name="Zody M.C."/>
            <person name="Asakawa S."/>
            <person name="Taudien S."/>
            <person name="Garber M."/>
            <person name="Kodira C.D."/>
            <person name="Schueler M.G."/>
            <person name="Shimizu A."/>
            <person name="Whittaker C.A."/>
            <person name="Chang J.L."/>
            <person name="Cuomo C.A."/>
            <person name="Dewar K."/>
            <person name="FitzGerald M.G."/>
            <person name="Yang X."/>
            <person name="Allen N.R."/>
            <person name="Anderson S."/>
            <person name="Asakawa T."/>
            <person name="Blechschmidt K."/>
            <person name="Bloom T."/>
            <person name="Borowsky M.L."/>
            <person name="Butler J."/>
            <person name="Cook A."/>
            <person name="Corum B."/>
            <person name="DeArellano K."/>
            <person name="DeCaprio D."/>
            <person name="Dooley K.T."/>
            <person name="Dorris L. III"/>
            <person name="Engels R."/>
            <person name="Gloeckner G."/>
            <person name="Hafez N."/>
            <person name="Hagopian D.S."/>
            <person name="Hall J.L."/>
            <person name="Ishikawa S.K."/>
            <person name="Jaffe D.B."/>
            <person name="Kamat A."/>
            <person name="Kudoh J."/>
            <person name="Lehmann R."/>
            <person name="Lokitsang T."/>
            <person name="Macdonald P."/>
            <person name="Major J.E."/>
            <person name="Matthews C.D."/>
            <person name="Mauceli E."/>
            <person name="Menzel U."/>
            <person name="Mihalev A.H."/>
            <person name="Minoshima S."/>
            <person name="Murayama Y."/>
            <person name="Naylor J.W."/>
            <person name="Nicol R."/>
            <person name="Nguyen C."/>
            <person name="O'Leary S.B."/>
            <person name="O'Neill K."/>
            <person name="Parker S.C.J."/>
            <person name="Polley A."/>
            <person name="Raymond C.K."/>
            <person name="Reichwald K."/>
            <person name="Rodriguez J."/>
            <person name="Sasaki T."/>
            <person name="Schilhabel M."/>
            <person name="Siddiqui R."/>
            <person name="Smith C.L."/>
            <person name="Sneddon T.P."/>
            <person name="Talamas J.A."/>
            <person name="Tenzin P."/>
            <person name="Topham K."/>
            <person name="Venkataraman V."/>
            <person name="Wen G."/>
            <person name="Yamazaki S."/>
            <person name="Young S.K."/>
            <person name="Zeng Q."/>
            <person name="Zimmer A.R."/>
            <person name="Rosenthal A."/>
            <person name="Birren B.W."/>
            <person name="Platzer M."/>
            <person name="Shimizu N."/>
            <person name="Lander E.S."/>
        </authorList>
    </citation>
    <scope>NUCLEOTIDE SEQUENCE [LARGE SCALE GENOMIC DNA]</scope>
</reference>
<reference key="5">
    <citation type="journal article" date="2004" name="Genome Res.">
        <title>The status, quality, and expansion of the NIH full-length cDNA project: the Mammalian Gene Collection (MGC).</title>
        <authorList>
            <consortium name="The MGC Project Team"/>
        </authorList>
    </citation>
    <scope>NUCLEOTIDE SEQUENCE [LARGE SCALE MRNA] (ISOFORMS 1 AND 3)</scope>
    <source>
        <tissue>Testis</tissue>
    </source>
</reference>
<reference key="6">
    <citation type="journal article" date="2011" name="Hum. Mutat.">
        <title>Analysis of the disintegrin-metalloproteinases family reveals ADAM29 and ADAM7 are often mutated in melanoma.</title>
        <authorList>
            <person name="Wei X."/>
            <person name="Moncada-Pazos A."/>
            <person name="Cal S."/>
            <person name="Soria-Valles C."/>
            <person name="Gartner J."/>
            <person name="Rudloff U."/>
            <person name="Lin J.C."/>
            <person name="Rosenberg S.A."/>
            <person name="Lopez-Otin C."/>
            <person name="Samuels Y."/>
        </authorList>
    </citation>
    <scope>VARIANTS SER-170; GLY-284; ILE-344; LYS-362 AND LEU-536</scope>
</reference>
<dbReference type="EMBL" id="AJ133004">
    <property type="protein sequence ID" value="CAB40812.1"/>
    <property type="molecule type" value="mRNA"/>
</dbReference>
<dbReference type="EMBL" id="AY358321">
    <property type="protein sequence ID" value="AAQ88687.1"/>
    <property type="molecule type" value="mRNA"/>
</dbReference>
<dbReference type="EMBL" id="AK313961">
    <property type="protein sequence ID" value="BAG36677.1"/>
    <property type="molecule type" value="mRNA"/>
</dbReference>
<dbReference type="EMBL" id="AC109633">
    <property type="status" value="NOT_ANNOTATED_CDS"/>
    <property type="molecule type" value="Genomic_DNA"/>
</dbReference>
<dbReference type="EMBL" id="AC136365">
    <property type="status" value="NOT_ANNOTATED_CDS"/>
    <property type="molecule type" value="Genomic_DNA"/>
</dbReference>
<dbReference type="EMBL" id="BC034624">
    <property type="protein sequence ID" value="AAH34624.1"/>
    <property type="molecule type" value="mRNA"/>
</dbReference>
<dbReference type="EMBL" id="BC070279">
    <property type="protein sequence ID" value="AAH70279.1"/>
    <property type="molecule type" value="mRNA"/>
</dbReference>
<dbReference type="EMBL" id="BC121045">
    <property type="protein sequence ID" value="AAI21046.1"/>
    <property type="molecule type" value="mRNA"/>
</dbReference>
<dbReference type="CCDS" id="CCDS55225.1">
    <molecule id="Q9Y3Q7-3"/>
</dbReference>
<dbReference type="CCDS" id="CCDS6113.1">
    <molecule id="Q9Y3Q7-1"/>
</dbReference>
<dbReference type="CCDS" id="CCDS83287.1">
    <molecule id="Q9Y3Q7-2"/>
</dbReference>
<dbReference type="RefSeq" id="NP_001177885.1">
    <molecule id="Q9Y3Q7-3"/>
    <property type="nucleotide sequence ID" value="NM_001190956.2"/>
</dbReference>
<dbReference type="RefSeq" id="NP_001307242.1">
    <molecule id="Q9Y3Q7-2"/>
    <property type="nucleotide sequence ID" value="NM_001320313.2"/>
</dbReference>
<dbReference type="RefSeq" id="NP_055052.1">
    <molecule id="Q9Y3Q7-1"/>
    <property type="nucleotide sequence ID" value="NM_014237.3"/>
</dbReference>
<dbReference type="SMR" id="Q9Y3Q7"/>
<dbReference type="BioGRID" id="114285">
    <property type="interactions" value="29"/>
</dbReference>
<dbReference type="FunCoup" id="Q9Y3Q7">
    <property type="interactions" value="30"/>
</dbReference>
<dbReference type="IntAct" id="Q9Y3Q7">
    <property type="interactions" value="15"/>
</dbReference>
<dbReference type="STRING" id="9606.ENSP00000265707"/>
<dbReference type="MEROPS" id="M12.957"/>
<dbReference type="GlyCosmos" id="Q9Y3Q7">
    <property type="glycosylation" value="12 sites, No reported glycans"/>
</dbReference>
<dbReference type="GlyGen" id="Q9Y3Q7">
    <property type="glycosylation" value="12 sites"/>
</dbReference>
<dbReference type="iPTMnet" id="Q9Y3Q7"/>
<dbReference type="PhosphoSitePlus" id="Q9Y3Q7"/>
<dbReference type="BioMuta" id="ADAM18"/>
<dbReference type="DMDM" id="20137582"/>
<dbReference type="jPOST" id="Q9Y3Q7"/>
<dbReference type="MassIVE" id="Q9Y3Q7"/>
<dbReference type="PaxDb" id="9606-ENSP00000265707"/>
<dbReference type="PeptideAtlas" id="Q9Y3Q7"/>
<dbReference type="ProteomicsDB" id="86061">
    <molecule id="Q9Y3Q7-1"/>
</dbReference>
<dbReference type="ProteomicsDB" id="86062">
    <molecule id="Q9Y3Q7-2"/>
</dbReference>
<dbReference type="Antibodypedia" id="23870">
    <property type="antibodies" value="38 antibodies from 7 providers"/>
</dbReference>
<dbReference type="DNASU" id="8749"/>
<dbReference type="Ensembl" id="ENST00000265707.10">
    <molecule id="Q9Y3Q7-1"/>
    <property type="protein sequence ID" value="ENSP00000265707.5"/>
    <property type="gene ID" value="ENSG00000168619.16"/>
</dbReference>
<dbReference type="Ensembl" id="ENST00000379866.5">
    <molecule id="Q9Y3Q7-2"/>
    <property type="protein sequence ID" value="ENSP00000369195.1"/>
    <property type="gene ID" value="ENSG00000168619.16"/>
</dbReference>
<dbReference type="Ensembl" id="ENST00000520772.5">
    <molecule id="Q9Y3Q7-3"/>
    <property type="protein sequence ID" value="ENSP00000429908.1"/>
    <property type="gene ID" value="ENSG00000168619.16"/>
</dbReference>
<dbReference type="Ensembl" id="ENST00000613609.4">
    <molecule id="Q9Y3Q7-1"/>
    <property type="protein sequence ID" value="ENSP00000482348.1"/>
    <property type="gene ID" value="ENSG00000278548.4"/>
</dbReference>
<dbReference type="Ensembl" id="ENST00000633688.1">
    <molecule id="Q9Y3Q7-3"/>
    <property type="protein sequence ID" value="ENSP00000488128.1"/>
    <property type="gene ID" value="ENSG00000278548.4"/>
</dbReference>
<dbReference type="Ensembl" id="ENST00000633768.1">
    <molecule id="Q9Y3Q7-2"/>
    <property type="protein sequence ID" value="ENSP00000488176.1"/>
    <property type="gene ID" value="ENSG00000278548.4"/>
</dbReference>
<dbReference type="GeneID" id="8749"/>
<dbReference type="KEGG" id="hsa:8749"/>
<dbReference type="MANE-Select" id="ENST00000265707.10">
    <property type="protein sequence ID" value="ENSP00000265707.5"/>
    <property type="RefSeq nucleotide sequence ID" value="NM_014237.3"/>
    <property type="RefSeq protein sequence ID" value="NP_055052.1"/>
</dbReference>
<dbReference type="UCSC" id="uc003xnh.4">
    <molecule id="Q9Y3Q7-1"/>
    <property type="organism name" value="human"/>
</dbReference>
<dbReference type="AGR" id="HGNC:196"/>
<dbReference type="CTD" id="8749"/>
<dbReference type="GeneCards" id="ADAM18"/>
<dbReference type="HGNC" id="HGNC:196">
    <property type="gene designation" value="ADAM18"/>
</dbReference>
<dbReference type="HPA" id="ENSG00000168619">
    <property type="expression patterns" value="Tissue enriched (testis)"/>
</dbReference>
<dbReference type="MIM" id="619495">
    <property type="type" value="gene"/>
</dbReference>
<dbReference type="neXtProt" id="NX_Q9Y3Q7"/>
<dbReference type="OpenTargets" id="ENSG00000168619"/>
<dbReference type="PharmGKB" id="PA24513"/>
<dbReference type="VEuPathDB" id="HostDB:ENSG00000168619"/>
<dbReference type="eggNOG" id="KOG3607">
    <property type="taxonomic scope" value="Eukaryota"/>
</dbReference>
<dbReference type="GeneTree" id="ENSGT00940000162281"/>
<dbReference type="HOGENOM" id="CLU_012714_4_3_1"/>
<dbReference type="InParanoid" id="Q9Y3Q7"/>
<dbReference type="OMA" id="GPQMYCV"/>
<dbReference type="OrthoDB" id="5951731at2759"/>
<dbReference type="PAN-GO" id="Q9Y3Q7">
    <property type="GO annotations" value="2 GO annotations based on evolutionary models"/>
</dbReference>
<dbReference type="PhylomeDB" id="Q9Y3Q7"/>
<dbReference type="TreeFam" id="TF314733"/>
<dbReference type="PathwayCommons" id="Q9Y3Q7"/>
<dbReference type="BioGRID-ORCS" id="8749">
    <property type="hits" value="12 hits in 1142 CRISPR screens"/>
</dbReference>
<dbReference type="ChiTaRS" id="ADAM18">
    <property type="organism name" value="human"/>
</dbReference>
<dbReference type="GeneWiki" id="ADAM18"/>
<dbReference type="GenomeRNAi" id="8749"/>
<dbReference type="Pharos" id="Q9Y3Q7">
    <property type="development level" value="Tdark"/>
</dbReference>
<dbReference type="PRO" id="PR:Q9Y3Q7"/>
<dbReference type="Proteomes" id="UP000005640">
    <property type="component" value="Chromosome 8"/>
</dbReference>
<dbReference type="RNAct" id="Q9Y3Q7">
    <property type="molecule type" value="protein"/>
</dbReference>
<dbReference type="Bgee" id="ENSG00000168619">
    <property type="expression patterns" value="Expressed in testis and 21 other cell types or tissues"/>
</dbReference>
<dbReference type="ExpressionAtlas" id="Q9Y3Q7">
    <property type="expression patterns" value="baseline and differential"/>
</dbReference>
<dbReference type="GO" id="GO:0016020">
    <property type="term" value="C:membrane"/>
    <property type="evidence" value="ECO:0000304"/>
    <property type="project" value="ProtInc"/>
</dbReference>
<dbReference type="GO" id="GO:0005886">
    <property type="term" value="C:plasma membrane"/>
    <property type="evidence" value="ECO:0000318"/>
    <property type="project" value="GO_Central"/>
</dbReference>
<dbReference type="GO" id="GO:0004222">
    <property type="term" value="F:metalloendopeptidase activity"/>
    <property type="evidence" value="ECO:0000318"/>
    <property type="project" value="GO_Central"/>
</dbReference>
<dbReference type="GO" id="GO:0008237">
    <property type="term" value="F:metallopeptidase activity"/>
    <property type="evidence" value="ECO:0000304"/>
    <property type="project" value="ProtInc"/>
</dbReference>
<dbReference type="GO" id="GO:0007339">
    <property type="term" value="P:binding of sperm to zona pellucida"/>
    <property type="evidence" value="ECO:0000318"/>
    <property type="project" value="GO_Central"/>
</dbReference>
<dbReference type="GO" id="GO:0007155">
    <property type="term" value="P:cell adhesion"/>
    <property type="evidence" value="ECO:0000318"/>
    <property type="project" value="GO_Central"/>
</dbReference>
<dbReference type="GO" id="GO:0030154">
    <property type="term" value="P:cell differentiation"/>
    <property type="evidence" value="ECO:0007669"/>
    <property type="project" value="UniProtKB-KW"/>
</dbReference>
<dbReference type="GO" id="GO:0008584">
    <property type="term" value="P:male gonad development"/>
    <property type="evidence" value="ECO:0000318"/>
    <property type="project" value="GO_Central"/>
</dbReference>
<dbReference type="GO" id="GO:0006508">
    <property type="term" value="P:proteolysis"/>
    <property type="evidence" value="ECO:0000318"/>
    <property type="project" value="GO_Central"/>
</dbReference>
<dbReference type="GO" id="GO:0007283">
    <property type="term" value="P:spermatogenesis"/>
    <property type="evidence" value="ECO:0000304"/>
    <property type="project" value="ProtInc"/>
</dbReference>
<dbReference type="CDD" id="cd04269">
    <property type="entry name" value="ZnMc_adamalysin_II_like"/>
    <property type="match status" value="1"/>
</dbReference>
<dbReference type="FunFam" id="3.40.390.10:FF:000033">
    <property type="entry name" value="A disintegrin and metallopeptidase domain 18"/>
    <property type="match status" value="1"/>
</dbReference>
<dbReference type="FunFam" id="4.10.70.10:FF:000001">
    <property type="entry name" value="Disintegrin and metalloproteinase domain-containing protein 22"/>
    <property type="match status" value="1"/>
</dbReference>
<dbReference type="Gene3D" id="3.40.390.10">
    <property type="entry name" value="Collagenase (Catalytic Domain)"/>
    <property type="match status" value="1"/>
</dbReference>
<dbReference type="Gene3D" id="4.10.70.10">
    <property type="entry name" value="Disintegrin domain"/>
    <property type="match status" value="1"/>
</dbReference>
<dbReference type="InterPro" id="IPR006586">
    <property type="entry name" value="ADAM_Cys-rich"/>
</dbReference>
<dbReference type="InterPro" id="IPR018358">
    <property type="entry name" value="Disintegrin_CS"/>
</dbReference>
<dbReference type="InterPro" id="IPR001762">
    <property type="entry name" value="Disintegrin_dom"/>
</dbReference>
<dbReference type="InterPro" id="IPR036436">
    <property type="entry name" value="Disintegrin_dom_sf"/>
</dbReference>
<dbReference type="InterPro" id="IPR024079">
    <property type="entry name" value="MetalloPept_cat_dom_sf"/>
</dbReference>
<dbReference type="InterPro" id="IPR001590">
    <property type="entry name" value="Peptidase_M12B"/>
</dbReference>
<dbReference type="InterPro" id="IPR002870">
    <property type="entry name" value="Peptidase_M12B_N"/>
</dbReference>
<dbReference type="InterPro" id="IPR034027">
    <property type="entry name" value="Reprolysin_adamalysin"/>
</dbReference>
<dbReference type="PANTHER" id="PTHR11905">
    <property type="entry name" value="ADAM A DISINTEGRIN AND METALLOPROTEASE DOMAIN"/>
    <property type="match status" value="1"/>
</dbReference>
<dbReference type="PANTHER" id="PTHR11905:SF158">
    <property type="entry name" value="DISINTEGRIN AND METALLOPROTEINASE DOMAIN-CONTAINING PROTEIN 18"/>
    <property type="match status" value="1"/>
</dbReference>
<dbReference type="Pfam" id="PF08516">
    <property type="entry name" value="ADAM_CR"/>
    <property type="match status" value="1"/>
</dbReference>
<dbReference type="Pfam" id="PF00200">
    <property type="entry name" value="Disintegrin"/>
    <property type="match status" value="1"/>
</dbReference>
<dbReference type="Pfam" id="PF01562">
    <property type="entry name" value="Pep_M12B_propep"/>
    <property type="match status" value="1"/>
</dbReference>
<dbReference type="Pfam" id="PF01421">
    <property type="entry name" value="Reprolysin"/>
    <property type="match status" value="1"/>
</dbReference>
<dbReference type="SMART" id="SM00608">
    <property type="entry name" value="ACR"/>
    <property type="match status" value="1"/>
</dbReference>
<dbReference type="SMART" id="SM00050">
    <property type="entry name" value="DISIN"/>
    <property type="match status" value="1"/>
</dbReference>
<dbReference type="SUPFAM" id="SSF57552">
    <property type="entry name" value="Blood coagulation inhibitor (disintegrin)"/>
    <property type="match status" value="1"/>
</dbReference>
<dbReference type="SUPFAM" id="SSF55486">
    <property type="entry name" value="Metalloproteases ('zincins'), catalytic domain"/>
    <property type="match status" value="1"/>
</dbReference>
<dbReference type="PROSITE" id="PS50215">
    <property type="entry name" value="ADAM_MEPRO"/>
    <property type="match status" value="1"/>
</dbReference>
<dbReference type="PROSITE" id="PS00427">
    <property type="entry name" value="DISINTEGRIN_1"/>
    <property type="match status" value="1"/>
</dbReference>
<dbReference type="PROSITE" id="PS50214">
    <property type="entry name" value="DISINTEGRIN_2"/>
    <property type="match status" value="1"/>
</dbReference>
<keyword id="KW-0025">Alternative splicing</keyword>
<keyword id="KW-0217">Developmental protein</keyword>
<keyword id="KW-0221">Differentiation</keyword>
<keyword id="KW-1015">Disulfide bond</keyword>
<keyword id="KW-0245">EGF-like domain</keyword>
<keyword id="KW-0325">Glycoprotein</keyword>
<keyword id="KW-0472">Membrane</keyword>
<keyword id="KW-1267">Proteomics identification</keyword>
<keyword id="KW-1185">Reference proteome</keyword>
<keyword id="KW-0732">Signal</keyword>
<keyword id="KW-0744">Spermatogenesis</keyword>
<keyword id="KW-0812">Transmembrane</keyword>
<keyword id="KW-1133">Transmembrane helix</keyword>
<proteinExistence type="evidence at protein level"/>
<protein>
    <recommendedName>
        <fullName>Disintegrin and metalloproteinase domain-containing protein 18</fullName>
        <shortName>ADAM 18</shortName>
    </recommendedName>
    <alternativeName>
        <fullName>Transmembrane metalloproteinase-like, disintegrin-like, and cysteine-rich protein III</fullName>
        <shortName>tMDC III</shortName>
    </alternativeName>
</protein>
<name>ADA18_HUMAN</name>
<accession>Q9Y3Q7</accession>
<accession>B2R9Y0</accession>
<accession>Q0VAI4</accession>
<accession>Q6IRW9</accession>
<accession>Q6UXJ9</accession>
<evidence type="ECO:0000250" key="1"/>
<evidence type="ECO:0000255" key="2"/>
<evidence type="ECO:0000255" key="3">
    <source>
        <dbReference type="PROSITE-ProRule" id="PRU00068"/>
    </source>
</evidence>
<evidence type="ECO:0000255" key="4">
    <source>
        <dbReference type="PROSITE-ProRule" id="PRU00276"/>
    </source>
</evidence>
<evidence type="ECO:0000269" key="5">
    <source>
    </source>
</evidence>
<evidence type="ECO:0000303" key="6">
    <source>
    </source>
</evidence>
<evidence type="ECO:0000303" key="7">
    <source>
    </source>
</evidence>